<comment type="function">
    <text evidence="1">Photosystem II (PSII) is a light-driven water:plastoquinone oxidoreductase that uses light energy to abstract electrons from H(2)O, generating O(2) and a proton gradient subsequently used for ATP formation. It consists of a core antenna complex that captures photons, and an electron transfer chain that converts photonic excitation into a charge separation. The D1/D2 (PsbA/PsbD) reaction center heterodimer binds P680, the primary electron donor of PSII as well as several subsequent electron acceptors.</text>
</comment>
<comment type="catalytic activity">
    <reaction evidence="1">
        <text>2 a plastoquinone + 4 hnu + 2 H2O = 2 a plastoquinol + O2</text>
        <dbReference type="Rhea" id="RHEA:36359"/>
        <dbReference type="Rhea" id="RHEA-COMP:9561"/>
        <dbReference type="Rhea" id="RHEA-COMP:9562"/>
        <dbReference type="ChEBI" id="CHEBI:15377"/>
        <dbReference type="ChEBI" id="CHEBI:15379"/>
        <dbReference type="ChEBI" id="CHEBI:17757"/>
        <dbReference type="ChEBI" id="CHEBI:30212"/>
        <dbReference type="ChEBI" id="CHEBI:62192"/>
        <dbReference type="EC" id="1.10.3.9"/>
    </reaction>
</comment>
<comment type="cofactor">
    <text evidence="1">The D1/D2 heterodimer binds P680, chlorophylls that are the primary electron donor of PSII, and subsequent electron acceptors. It shares a non-heme iron and each subunit binds pheophytin, quinone, additional chlorophylls, carotenoids and lipids. D1 provides most of the ligands for the Mn4-Ca-O5 cluster of the oxygen-evolving complex (OEC). There is also a Cl(-1) ion associated with D1 and D2, which is required for oxygen evolution. The PSII complex binds additional chlorophylls, carotenoids and specific lipids.</text>
</comment>
<comment type="subunit">
    <text evidence="1">PSII is composed of 1 copy each of membrane proteins PsbA, PsbB, PsbC, PsbD, PsbE, PsbF, PsbH, PsbI, PsbJ, PsbK, PsbL, PsbM, PsbT, PsbX, PsbY, PsbZ, Psb30/Ycf12, at least 3 peripheral proteins of the oxygen-evolving complex and a large number of cofactors. It forms dimeric complexes.</text>
</comment>
<comment type="subcellular location">
    <subcellularLocation>
        <location evidence="1">Plastid</location>
        <location evidence="1">Chloroplast thylakoid membrane</location>
        <topology evidence="1">Multi-pass membrane protein</topology>
    </subcellularLocation>
</comment>
<comment type="PTM">
    <text evidence="1">Tyr-161 forms a radical intermediate that is referred to as redox-active TyrZ, YZ or Y-Z.</text>
</comment>
<comment type="PTM">
    <text evidence="1">C-terminally processed by CTPA; processing is essential to allow assembly of the oxygen-evolving complex and thus photosynthetic growth.</text>
</comment>
<comment type="miscellaneous">
    <text evidence="1">2 of the reaction center chlorophylls (ChlD1 and ChlD2) are entirely coordinated by water.</text>
</comment>
<comment type="miscellaneous">
    <text evidence="1">Herbicides such as atrazine, BNT, diuron or ioxynil bind in the Q(B) binding site and block subsequent electron transfer.</text>
</comment>
<comment type="similarity">
    <text evidence="1">Belongs to the reaction center PufL/M/PsbA/D family.</text>
</comment>
<gene>
    <name evidence="1" type="primary">psbA</name>
</gene>
<keyword id="KW-0007">Acetylation</keyword>
<keyword id="KW-0106">Calcium</keyword>
<keyword id="KW-0148">Chlorophyll</keyword>
<keyword id="KW-0150">Chloroplast</keyword>
<keyword id="KW-0157">Chromophore</keyword>
<keyword id="KW-0249">Electron transport</keyword>
<keyword id="KW-0359">Herbicide resistance</keyword>
<keyword id="KW-0408">Iron</keyword>
<keyword id="KW-0460">Magnesium</keyword>
<keyword id="KW-0464">Manganese</keyword>
<keyword id="KW-0472">Membrane</keyword>
<keyword id="KW-0479">Metal-binding</keyword>
<keyword id="KW-0560">Oxidoreductase</keyword>
<keyword id="KW-0597">Phosphoprotein</keyword>
<keyword id="KW-0602">Photosynthesis</keyword>
<keyword id="KW-0604">Photosystem II</keyword>
<keyword id="KW-0934">Plastid</keyword>
<keyword id="KW-0793">Thylakoid</keyword>
<keyword id="KW-0812">Transmembrane</keyword>
<keyword id="KW-1133">Transmembrane helix</keyword>
<keyword id="KW-0813">Transport</keyword>
<name>PSBA_CHAVU</name>
<reference key="1">
    <citation type="journal article" date="2006" name="Mol. Biol. Evol.">
        <title>The chloroplast genome sequence of Chara vulgaris sheds new light into the closest green algal relatives of land plants.</title>
        <authorList>
            <person name="Turmel M."/>
            <person name="Otis C."/>
            <person name="Lemieux C."/>
        </authorList>
    </citation>
    <scope>NUCLEOTIDE SEQUENCE [LARGE SCALE GENOMIC DNA]</scope>
</reference>
<accession>Q1ACM1</accession>
<feature type="initiator methionine" description="Removed" evidence="1">
    <location>
        <position position="1"/>
    </location>
</feature>
<feature type="chain" id="PRO_0000339966" description="Photosystem II protein D1" evidence="1">
    <location>
        <begin position="2"/>
        <end position="344"/>
    </location>
</feature>
<feature type="propeptide" id="PRO_0000339967" evidence="1">
    <location>
        <begin position="345"/>
        <end position="353"/>
    </location>
</feature>
<feature type="transmembrane region" description="Helical" evidence="1">
    <location>
        <begin position="29"/>
        <end position="46"/>
    </location>
</feature>
<feature type="transmembrane region" description="Helical" evidence="1">
    <location>
        <begin position="118"/>
        <end position="133"/>
    </location>
</feature>
<feature type="transmembrane region" description="Helical" evidence="1">
    <location>
        <begin position="142"/>
        <end position="156"/>
    </location>
</feature>
<feature type="transmembrane region" description="Helical" evidence="1">
    <location>
        <begin position="197"/>
        <end position="218"/>
    </location>
</feature>
<feature type="transmembrane region" description="Helical" evidence="1">
    <location>
        <begin position="274"/>
        <end position="288"/>
    </location>
</feature>
<feature type="binding site" description="axial binding residue" evidence="1">
    <location>
        <position position="118"/>
    </location>
    <ligand>
        <name>chlorophyll a</name>
        <dbReference type="ChEBI" id="CHEBI:58416"/>
        <label>ChlzD1</label>
    </ligand>
    <ligandPart>
        <name>Mg</name>
        <dbReference type="ChEBI" id="CHEBI:25107"/>
    </ligandPart>
</feature>
<feature type="binding site" evidence="1">
    <location>
        <position position="126"/>
    </location>
    <ligand>
        <name>pheophytin a</name>
        <dbReference type="ChEBI" id="CHEBI:136840"/>
        <label>D1</label>
    </ligand>
</feature>
<feature type="binding site" evidence="1">
    <location>
        <position position="170"/>
    </location>
    <ligand>
        <name>[CaMn4O5] cluster</name>
        <dbReference type="ChEBI" id="CHEBI:189552"/>
    </ligand>
</feature>
<feature type="binding site" evidence="1">
    <location>
        <position position="189"/>
    </location>
    <ligand>
        <name>[CaMn4O5] cluster</name>
        <dbReference type="ChEBI" id="CHEBI:189552"/>
    </ligand>
</feature>
<feature type="binding site" description="axial binding residue" evidence="1">
    <location>
        <position position="198"/>
    </location>
    <ligand>
        <name>chlorophyll a</name>
        <dbReference type="ChEBI" id="CHEBI:58416"/>
        <label>PD1</label>
    </ligand>
    <ligandPart>
        <name>Mg</name>
        <dbReference type="ChEBI" id="CHEBI:25107"/>
    </ligandPart>
</feature>
<feature type="binding site" evidence="1">
    <location>
        <position position="215"/>
    </location>
    <ligand>
        <name>a quinone</name>
        <dbReference type="ChEBI" id="CHEBI:132124"/>
        <label>B</label>
    </ligand>
</feature>
<feature type="binding site" evidence="1">
    <location>
        <position position="215"/>
    </location>
    <ligand>
        <name>Fe cation</name>
        <dbReference type="ChEBI" id="CHEBI:24875"/>
        <note>ligand shared with heterodimeric partner</note>
    </ligand>
</feature>
<feature type="binding site" evidence="1">
    <location>
        <begin position="264"/>
        <end position="265"/>
    </location>
    <ligand>
        <name>a quinone</name>
        <dbReference type="ChEBI" id="CHEBI:132124"/>
        <label>B</label>
    </ligand>
</feature>
<feature type="binding site" evidence="1">
    <location>
        <position position="272"/>
    </location>
    <ligand>
        <name>Fe cation</name>
        <dbReference type="ChEBI" id="CHEBI:24875"/>
        <note>ligand shared with heterodimeric partner</note>
    </ligand>
</feature>
<feature type="binding site" evidence="1">
    <location>
        <position position="332"/>
    </location>
    <ligand>
        <name>[CaMn4O5] cluster</name>
        <dbReference type="ChEBI" id="CHEBI:189552"/>
    </ligand>
</feature>
<feature type="binding site" evidence="1">
    <location>
        <position position="333"/>
    </location>
    <ligand>
        <name>[CaMn4O5] cluster</name>
        <dbReference type="ChEBI" id="CHEBI:189552"/>
    </ligand>
</feature>
<feature type="binding site" evidence="1">
    <location>
        <position position="342"/>
    </location>
    <ligand>
        <name>[CaMn4O5] cluster</name>
        <dbReference type="ChEBI" id="CHEBI:189552"/>
    </ligand>
</feature>
<feature type="binding site" evidence="1">
    <location>
        <position position="344"/>
    </location>
    <ligand>
        <name>[CaMn4O5] cluster</name>
        <dbReference type="ChEBI" id="CHEBI:189552"/>
    </ligand>
</feature>
<feature type="site" description="Tyrosine radical intermediate" evidence="1">
    <location>
        <position position="161"/>
    </location>
</feature>
<feature type="site" description="Stabilizes free radical intermediate" evidence="1">
    <location>
        <position position="190"/>
    </location>
</feature>
<feature type="site" description="Cleavage; by CTPA" evidence="1">
    <location>
        <begin position="344"/>
        <end position="345"/>
    </location>
</feature>
<feature type="modified residue" description="N-acetylthreonine" evidence="1">
    <location>
        <position position="2"/>
    </location>
</feature>
<feature type="modified residue" description="Phosphothreonine" evidence="1">
    <location>
        <position position="2"/>
    </location>
</feature>
<proteinExistence type="inferred from homology"/>
<sequence length="353" mass="38870">MTATLERRESSNLWGRFCDWVTSTENRLYIGWFGVLMIPTLLTATSVFIIAFIAAPPVDIDGIREPVSGSLLYGNNIISGAIVPTSAAIGLHFYPIWEAASLDEWLYNGGPYEMIVLHFLLGVACYMGREWELSFRLGMRPWIAVAYSAPVAAATAVFLIYPIGQGSFSDGMPLGISGTFNFMIVFQAEHNILMHPFHMLGVAGVFGGSLFSAMHGSLVTSSLIRETTENESANAGYKFGQEEETYNIVAAHGYFGRLIFQYASFNNSRSLHFFLAAWPVVGIWFTALGISTMAFNLNGFNFNQSVVDSQGRVINTWADIINRANLGMEVMHERNAHNFPLDLASVEAPSINA</sequence>
<dbReference type="EC" id="1.10.3.9" evidence="1"/>
<dbReference type="EMBL" id="DQ229107">
    <property type="protein sequence ID" value="ABA61933.1"/>
    <property type="molecule type" value="Genomic_DNA"/>
</dbReference>
<dbReference type="RefSeq" id="YP_635726.1">
    <property type="nucleotide sequence ID" value="NC_008097.1"/>
</dbReference>
<dbReference type="SMR" id="Q1ACM1"/>
<dbReference type="GeneID" id="4100220"/>
<dbReference type="GO" id="GO:0009535">
    <property type="term" value="C:chloroplast thylakoid membrane"/>
    <property type="evidence" value="ECO:0007669"/>
    <property type="project" value="UniProtKB-SubCell"/>
</dbReference>
<dbReference type="GO" id="GO:0009523">
    <property type="term" value="C:photosystem II"/>
    <property type="evidence" value="ECO:0007669"/>
    <property type="project" value="UniProtKB-KW"/>
</dbReference>
<dbReference type="GO" id="GO:0016168">
    <property type="term" value="F:chlorophyll binding"/>
    <property type="evidence" value="ECO:0007669"/>
    <property type="project" value="UniProtKB-UniRule"/>
</dbReference>
<dbReference type="GO" id="GO:0045156">
    <property type="term" value="F:electron transporter, transferring electrons within the cyclic electron transport pathway of photosynthesis activity"/>
    <property type="evidence" value="ECO:0007669"/>
    <property type="project" value="InterPro"/>
</dbReference>
<dbReference type="GO" id="GO:0005506">
    <property type="term" value="F:iron ion binding"/>
    <property type="evidence" value="ECO:0007669"/>
    <property type="project" value="UniProtKB-UniRule"/>
</dbReference>
<dbReference type="GO" id="GO:0016682">
    <property type="term" value="F:oxidoreductase activity, acting on diphenols and related substances as donors, oxygen as acceptor"/>
    <property type="evidence" value="ECO:0007669"/>
    <property type="project" value="UniProtKB-UniRule"/>
</dbReference>
<dbReference type="GO" id="GO:0010242">
    <property type="term" value="F:oxygen evolving activity"/>
    <property type="evidence" value="ECO:0007669"/>
    <property type="project" value="UniProtKB-EC"/>
</dbReference>
<dbReference type="GO" id="GO:0009772">
    <property type="term" value="P:photosynthetic electron transport in photosystem II"/>
    <property type="evidence" value="ECO:0007669"/>
    <property type="project" value="InterPro"/>
</dbReference>
<dbReference type="GO" id="GO:0009635">
    <property type="term" value="P:response to herbicide"/>
    <property type="evidence" value="ECO:0007669"/>
    <property type="project" value="UniProtKB-KW"/>
</dbReference>
<dbReference type="CDD" id="cd09289">
    <property type="entry name" value="Photosystem-II_D1"/>
    <property type="match status" value="1"/>
</dbReference>
<dbReference type="FunFam" id="1.20.85.10:FF:000002">
    <property type="entry name" value="Photosystem II protein D1"/>
    <property type="match status" value="1"/>
</dbReference>
<dbReference type="Gene3D" id="1.20.85.10">
    <property type="entry name" value="Photosystem II protein D1-like"/>
    <property type="match status" value="1"/>
</dbReference>
<dbReference type="HAMAP" id="MF_01379">
    <property type="entry name" value="PSII_PsbA_D1"/>
    <property type="match status" value="1"/>
</dbReference>
<dbReference type="InterPro" id="IPR055266">
    <property type="entry name" value="D1/D2"/>
</dbReference>
<dbReference type="InterPro" id="IPR036854">
    <property type="entry name" value="Photo_II_D1/D2_sf"/>
</dbReference>
<dbReference type="InterPro" id="IPR000484">
    <property type="entry name" value="Photo_RC_L/M"/>
</dbReference>
<dbReference type="InterPro" id="IPR055265">
    <property type="entry name" value="Photo_RC_L/M_CS"/>
</dbReference>
<dbReference type="InterPro" id="IPR005867">
    <property type="entry name" value="PSII_D1"/>
</dbReference>
<dbReference type="NCBIfam" id="TIGR01151">
    <property type="entry name" value="psbA"/>
    <property type="match status" value="1"/>
</dbReference>
<dbReference type="PANTHER" id="PTHR33149:SF12">
    <property type="entry name" value="PHOTOSYSTEM II D2 PROTEIN"/>
    <property type="match status" value="1"/>
</dbReference>
<dbReference type="PANTHER" id="PTHR33149">
    <property type="entry name" value="PHOTOSYSTEM II PROTEIN D1"/>
    <property type="match status" value="1"/>
</dbReference>
<dbReference type="Pfam" id="PF00124">
    <property type="entry name" value="Photo_RC"/>
    <property type="match status" value="1"/>
</dbReference>
<dbReference type="PRINTS" id="PR00256">
    <property type="entry name" value="REACTNCENTRE"/>
</dbReference>
<dbReference type="SUPFAM" id="SSF81483">
    <property type="entry name" value="Bacterial photosystem II reaction centre, L and M subunits"/>
    <property type="match status" value="1"/>
</dbReference>
<dbReference type="PROSITE" id="PS00244">
    <property type="entry name" value="REACTION_CENTER"/>
    <property type="match status" value="1"/>
</dbReference>
<geneLocation type="chloroplast"/>
<evidence type="ECO:0000255" key="1">
    <source>
        <dbReference type="HAMAP-Rule" id="MF_01379"/>
    </source>
</evidence>
<protein>
    <recommendedName>
        <fullName evidence="1">Photosystem II protein D1</fullName>
        <shortName evidence="1">PSII D1 protein</shortName>
        <ecNumber evidence="1">1.10.3.9</ecNumber>
    </recommendedName>
    <alternativeName>
        <fullName evidence="1">Photosystem II Q(B) protein</fullName>
    </alternativeName>
</protein>
<organism>
    <name type="scientific">Chara vulgaris</name>
    <name type="common">Common stonewort</name>
    <dbReference type="NCBI Taxonomy" id="55564"/>
    <lineage>
        <taxon>Eukaryota</taxon>
        <taxon>Viridiplantae</taxon>
        <taxon>Streptophyta</taxon>
        <taxon>Charophyceae</taxon>
        <taxon>Charales</taxon>
        <taxon>Characeae</taxon>
        <taxon>Chara</taxon>
    </lineage>
</organism>